<sequence length="609" mass="68698">MKWVESIFLIFLLNFTESRTLHRNEYGIASILDSYQCTAEISLADLATIFFAQFVQEATYKEVSKMVKDALTAIEKPTGDEQSAGCLENQLPAFLEELCHEKEILEKYGLSDCCSQSEEGRHNCFLAHKKPTPASIPLFQVPEPVTSCEAYEEDRETFMNKFIYEIARRHPFLYAPTILLWAARYDKIIPSCCKAENAVECFQTKAATVTKELRESSLLNQHACAVMKNFGTRTFQAITVTKLSQKFTKVNFTEIQKLVLDVAHVHEHCCRGDVLDCLQDGEKIMSYICSQQDTLSNKITECCKLTTLERGQCIIHAENDEKPEGLSPNLNRFLGDRDFNQFSSGEKNIFLASFVHEYSRRHPQLAVSVILRVAKGYQELLEKCFQTENPLECQDKGEEELQKYIQESQALAKRSCGLFQKLGEYYLQNAFLVAYTKKAPQLTSSELMAITRKMAATAATCCQLSEDKLLACGEGAADIIIGHLCIRHEMTPVNPGVGQCCTSSYANRRPCFSSLVVDETYVPPAFSDDKFIFHKDLCQAQGVALQTMKQEFLINLVKQKPQITEEQLETVIADFSGLLEKCCQGQEQEVCFAEEGQKLISKTRTALGV</sequence>
<organism>
    <name type="scientific">Gorilla gorilla gorilla</name>
    <name type="common">Western lowland gorilla</name>
    <dbReference type="NCBI Taxonomy" id="9595"/>
    <lineage>
        <taxon>Eukaryota</taxon>
        <taxon>Metazoa</taxon>
        <taxon>Chordata</taxon>
        <taxon>Craniata</taxon>
        <taxon>Vertebrata</taxon>
        <taxon>Euteleostomi</taxon>
        <taxon>Mammalia</taxon>
        <taxon>Eutheria</taxon>
        <taxon>Euarchontoglires</taxon>
        <taxon>Primates</taxon>
        <taxon>Haplorrhini</taxon>
        <taxon>Catarrhini</taxon>
        <taxon>Hominidae</taxon>
        <taxon>Gorilla</taxon>
    </lineage>
</organism>
<accession>P28050</accession>
<reference key="1">
    <citation type="journal article" date="1991" name="Genomics">
        <title>Structure of the gorilla alpha-fetoprotein gene and the divergence of primates.</title>
        <authorList>
            <person name="Ryan S.C."/>
            <person name="Zielinski R."/>
            <person name="Dugaiczyk A."/>
        </authorList>
    </citation>
    <scope>NUCLEOTIDE SEQUENCE [GENOMIC DNA]</scope>
</reference>
<evidence type="ECO:0000250" key="1"/>
<evidence type="ECO:0000250" key="2">
    <source>
        <dbReference type="UniProtKB" id="P02771"/>
    </source>
</evidence>
<evidence type="ECO:0000255" key="3"/>
<evidence type="ECO:0000255" key="4">
    <source>
        <dbReference type="PROSITE-ProRule" id="PRU00769"/>
    </source>
</evidence>
<feature type="signal peptide" evidence="1">
    <location>
        <begin position="1"/>
        <end position="18"/>
    </location>
</feature>
<feature type="chain" id="PRO_0000001095" description="Alpha-fetoprotein">
    <location>
        <begin position="19"/>
        <end position="609"/>
    </location>
</feature>
<feature type="domain" description="Albumin 1" evidence="4">
    <location>
        <begin position="19"/>
        <end position="210"/>
    </location>
</feature>
<feature type="domain" description="Albumin 2" evidence="4">
    <location>
        <begin position="211"/>
        <end position="402"/>
    </location>
</feature>
<feature type="domain" description="Albumin 3" evidence="4">
    <location>
        <begin position="403"/>
        <end position="601"/>
    </location>
</feature>
<feature type="binding site" evidence="1">
    <location>
        <position position="22"/>
    </location>
    <ligand>
        <name>Cu(2+)</name>
        <dbReference type="ChEBI" id="CHEBI:29036"/>
    </ligand>
</feature>
<feature type="modified residue" description="Phosphoserine" evidence="2">
    <location>
        <position position="111"/>
    </location>
</feature>
<feature type="modified residue" description="Phosphoserine" evidence="2">
    <location>
        <position position="115"/>
    </location>
</feature>
<feature type="modified residue" description="Phosphoserine" evidence="2">
    <location>
        <position position="117"/>
    </location>
</feature>
<feature type="modified residue" description="Phosphoserine" evidence="2">
    <location>
        <position position="344"/>
    </location>
</feature>
<feature type="modified residue" description="Phosphoserine" evidence="2">
    <location>
        <position position="444"/>
    </location>
</feature>
<feature type="glycosylation site" description="N-linked (GlcNAc...) asparagine" evidence="3">
    <location>
        <position position="251"/>
    </location>
</feature>
<feature type="disulfide bond" evidence="4">
    <location>
        <begin position="99"/>
        <end position="114"/>
    </location>
</feature>
<feature type="disulfide bond" evidence="4">
    <location>
        <begin position="113"/>
        <end position="124"/>
    </location>
</feature>
<feature type="disulfide bond" evidence="4">
    <location>
        <begin position="148"/>
        <end position="193"/>
    </location>
</feature>
<feature type="disulfide bond" evidence="4">
    <location>
        <begin position="192"/>
        <end position="201"/>
    </location>
</feature>
<feature type="disulfide bond" evidence="4">
    <location>
        <begin position="224"/>
        <end position="270"/>
    </location>
</feature>
<feature type="disulfide bond" evidence="4">
    <location>
        <begin position="269"/>
        <end position="277"/>
    </location>
</feature>
<feature type="disulfide bond" evidence="4">
    <location>
        <begin position="289"/>
        <end position="303"/>
    </location>
</feature>
<feature type="disulfide bond" evidence="4">
    <location>
        <begin position="302"/>
        <end position="313"/>
    </location>
</feature>
<feature type="disulfide bond" evidence="4">
    <location>
        <begin position="384"/>
        <end position="393"/>
    </location>
</feature>
<feature type="disulfide bond" evidence="4">
    <location>
        <begin position="416"/>
        <end position="462"/>
    </location>
</feature>
<feature type="disulfide bond" evidence="4">
    <location>
        <begin position="461"/>
        <end position="472"/>
    </location>
</feature>
<feature type="disulfide bond" evidence="4">
    <location>
        <begin position="485"/>
        <end position="501"/>
    </location>
</feature>
<feature type="disulfide bond" evidence="4">
    <location>
        <begin position="500"/>
        <end position="511"/>
    </location>
</feature>
<feature type="disulfide bond" evidence="4">
    <location>
        <begin position="538"/>
        <end position="583"/>
    </location>
</feature>
<feature type="disulfide bond" evidence="4">
    <location>
        <begin position="582"/>
        <end position="591"/>
    </location>
</feature>
<protein>
    <recommendedName>
        <fullName>Alpha-fetoprotein</fullName>
    </recommendedName>
    <alternativeName>
        <fullName>Alpha-1-fetoprotein</fullName>
    </alternativeName>
    <alternativeName>
        <fullName>Alpha-fetoglobulin</fullName>
    </alternativeName>
</protein>
<name>FETA_GORGO</name>
<proteinExistence type="evidence at transcript level"/>
<gene>
    <name type="primary">AFP</name>
</gene>
<keyword id="KW-0186">Copper</keyword>
<keyword id="KW-1015">Disulfide bond</keyword>
<keyword id="KW-0325">Glycoprotein</keyword>
<keyword id="KW-0479">Metal-binding</keyword>
<keyword id="KW-0533">Nickel</keyword>
<keyword id="KW-0597">Phosphoprotein</keyword>
<keyword id="KW-1185">Reference proteome</keyword>
<keyword id="KW-0677">Repeat</keyword>
<keyword id="KW-0964">Secreted</keyword>
<keyword id="KW-0732">Signal</keyword>
<keyword id="KW-0765">Sulfation</keyword>
<comment type="function">
    <text>Binds copper, nickel, and fatty acids as well as, and bilirubin less well than, serum albumin.</text>
</comment>
<comment type="subunit">
    <text evidence="1">Dimeric and trimeric forms have been found in addition to the monomeric form.</text>
</comment>
<comment type="subcellular location">
    <subcellularLocation>
        <location>Secreted</location>
    </subcellularLocation>
</comment>
<comment type="tissue specificity">
    <text>Plasma.</text>
</comment>
<comment type="PTM">
    <text evidence="1">Sulfated.</text>
</comment>
<comment type="similarity">
    <text evidence="4">Belongs to the ALB/AFP/VDB family.</text>
</comment>
<dbReference type="EMBL" id="M38272">
    <property type="protein sequence ID" value="AAA73520.1"/>
    <property type="molecule type" value="Genomic_DNA"/>
</dbReference>
<dbReference type="PIR" id="A37970">
    <property type="entry name" value="FPGO"/>
</dbReference>
<dbReference type="RefSeq" id="XP_004038852.2">
    <property type="nucleotide sequence ID" value="XM_004038804.5"/>
</dbReference>
<dbReference type="SMR" id="P28050"/>
<dbReference type="FunCoup" id="P28050">
    <property type="interactions" value="243"/>
</dbReference>
<dbReference type="STRING" id="9593.ENSGGOP00000018378"/>
<dbReference type="GlyCosmos" id="P28050">
    <property type="glycosylation" value="1 site, No reported glycans"/>
</dbReference>
<dbReference type="GeneID" id="101128573"/>
<dbReference type="eggNOG" id="ENOG502R7EA">
    <property type="taxonomic scope" value="Eukaryota"/>
</dbReference>
<dbReference type="InParanoid" id="P28050"/>
<dbReference type="Proteomes" id="UP000001519">
    <property type="component" value="Unplaced"/>
</dbReference>
<dbReference type="GO" id="GO:0005737">
    <property type="term" value="C:cytoplasm"/>
    <property type="evidence" value="ECO:0000318"/>
    <property type="project" value="GO_Central"/>
</dbReference>
<dbReference type="GO" id="GO:0005615">
    <property type="term" value="C:extracellular space"/>
    <property type="evidence" value="ECO:0007669"/>
    <property type="project" value="InterPro"/>
</dbReference>
<dbReference type="GO" id="GO:0046872">
    <property type="term" value="F:metal ion binding"/>
    <property type="evidence" value="ECO:0007669"/>
    <property type="project" value="UniProtKB-KW"/>
</dbReference>
<dbReference type="CDD" id="cd00015">
    <property type="entry name" value="ALBUMIN"/>
    <property type="match status" value="3"/>
</dbReference>
<dbReference type="FunFam" id="1.10.246.10:FF:000001">
    <property type="entry name" value="Serum albumin"/>
    <property type="match status" value="3"/>
</dbReference>
<dbReference type="FunFam" id="1.10.246.10:FF:000002">
    <property type="entry name" value="Serum albumin"/>
    <property type="match status" value="2"/>
</dbReference>
<dbReference type="FunFam" id="1.10.246.10:FF:000004">
    <property type="entry name" value="Serum albumin"/>
    <property type="match status" value="1"/>
</dbReference>
<dbReference type="Gene3D" id="1.10.246.10">
    <property type="match status" value="6"/>
</dbReference>
<dbReference type="InterPro" id="IPR000264">
    <property type="entry name" value="ALB/AFP/VDB"/>
</dbReference>
<dbReference type="InterPro" id="IPR020858">
    <property type="entry name" value="Serum_albumin-like"/>
</dbReference>
<dbReference type="InterPro" id="IPR021177">
    <property type="entry name" value="Serum_albumin/AFP/Afamin"/>
</dbReference>
<dbReference type="InterPro" id="IPR020857">
    <property type="entry name" value="Serum_albumin_CS"/>
</dbReference>
<dbReference type="InterPro" id="IPR014760">
    <property type="entry name" value="Serum_albumin_N"/>
</dbReference>
<dbReference type="PANTHER" id="PTHR11385:SF7">
    <property type="entry name" value="ALPHA-FETOPROTEIN"/>
    <property type="match status" value="1"/>
</dbReference>
<dbReference type="PANTHER" id="PTHR11385">
    <property type="entry name" value="SERUM ALBUMIN-RELATED"/>
    <property type="match status" value="1"/>
</dbReference>
<dbReference type="Pfam" id="PF00273">
    <property type="entry name" value="Serum_albumin"/>
    <property type="match status" value="3"/>
</dbReference>
<dbReference type="PIRSF" id="PIRSF002520">
    <property type="entry name" value="Serum_albumin_subgroup"/>
    <property type="match status" value="1"/>
</dbReference>
<dbReference type="PRINTS" id="PR00803">
    <property type="entry name" value="AFETOPROTEIN"/>
</dbReference>
<dbReference type="PRINTS" id="PR00802">
    <property type="entry name" value="SERUMALBUMIN"/>
</dbReference>
<dbReference type="SMART" id="SM00103">
    <property type="entry name" value="ALBUMIN"/>
    <property type="match status" value="3"/>
</dbReference>
<dbReference type="SUPFAM" id="SSF48552">
    <property type="entry name" value="Serum albumin-like"/>
    <property type="match status" value="3"/>
</dbReference>
<dbReference type="PROSITE" id="PS00212">
    <property type="entry name" value="ALBUMIN_1"/>
    <property type="match status" value="2"/>
</dbReference>
<dbReference type="PROSITE" id="PS51438">
    <property type="entry name" value="ALBUMIN_2"/>
    <property type="match status" value="3"/>
</dbReference>